<accession>B7UHC3</accession>
<feature type="chain" id="PRO_1000165583" description="Nitric oxide reductase FlRd-NAD(+) reductase">
    <location>
        <begin position="1"/>
        <end position="377"/>
    </location>
</feature>
<evidence type="ECO:0000255" key="1">
    <source>
        <dbReference type="HAMAP-Rule" id="MF_01313"/>
    </source>
</evidence>
<sequence>MSNGIVIIGSGFAARQLVKNIRKQDASIPLTLIAADSMDEYNKPDLSHVISQGQRADDLTRQTAGEFAEQFNLRLFPHTWVTDIDAEAHVVKSQNNQWQYDKLVLATGASAFVPPVPGRELMLTLNSQQEYRACETQLRDARRVLIVGGGLIGSELAMDFCRAGKMVTLIDNAASILASLMPPEVSSRLQHRLTEMGVHLLLKSQLQGLEKTNSGILATLDRQRSIEVDTVIAATGLRPETALARRAGLTINRGVCVDSYLQTSNADIYALGDCAEINGQVLPFLQPIQLSAMVLAKNLLGNNTPLKLPAMLVKIKTPELPLHLAGETQRQDLRWQINTERQGMVARGVDDADQLRAFVVSEDRMKEAFGLLKTLSM</sequence>
<reference key="1">
    <citation type="journal article" date="2009" name="J. Bacteriol.">
        <title>Complete genome sequence and comparative genome analysis of enteropathogenic Escherichia coli O127:H6 strain E2348/69.</title>
        <authorList>
            <person name="Iguchi A."/>
            <person name="Thomson N.R."/>
            <person name="Ogura Y."/>
            <person name="Saunders D."/>
            <person name="Ooka T."/>
            <person name="Henderson I.R."/>
            <person name="Harris D."/>
            <person name="Asadulghani M."/>
            <person name="Kurokawa K."/>
            <person name="Dean P."/>
            <person name="Kenny B."/>
            <person name="Quail M.A."/>
            <person name="Thurston S."/>
            <person name="Dougan G."/>
            <person name="Hayashi T."/>
            <person name="Parkhill J."/>
            <person name="Frankel G."/>
        </authorList>
    </citation>
    <scope>NUCLEOTIDE SEQUENCE [LARGE SCALE GENOMIC DNA]</scope>
    <source>
        <strain>E2348/69 / EPEC</strain>
    </source>
</reference>
<proteinExistence type="inferred from homology"/>
<dbReference type="EC" id="1.18.1.-" evidence="1"/>
<dbReference type="EMBL" id="FM180568">
    <property type="protein sequence ID" value="CAS10516.1"/>
    <property type="molecule type" value="Genomic_DNA"/>
</dbReference>
<dbReference type="RefSeq" id="WP_000064719.1">
    <property type="nucleotide sequence ID" value="NC_011601.1"/>
</dbReference>
<dbReference type="SMR" id="B7UHC3"/>
<dbReference type="KEGG" id="ecg:E2348C_2968"/>
<dbReference type="HOGENOM" id="CLU_003291_4_4_6"/>
<dbReference type="UniPathway" id="UPA00638"/>
<dbReference type="Proteomes" id="UP000008205">
    <property type="component" value="Chromosome"/>
</dbReference>
<dbReference type="GO" id="GO:0005737">
    <property type="term" value="C:cytoplasm"/>
    <property type="evidence" value="ECO:0007669"/>
    <property type="project" value="UniProtKB-SubCell"/>
</dbReference>
<dbReference type="GO" id="GO:0016731">
    <property type="term" value="F:oxidoreductase activity, acting on iron-sulfur proteins as donors, NAD or NADP as acceptor"/>
    <property type="evidence" value="ECO:0007669"/>
    <property type="project" value="UniProtKB-UniRule"/>
</dbReference>
<dbReference type="FunFam" id="3.30.390.120:FF:000001">
    <property type="entry name" value="Nitric oxide reductase FlRd-NAD(+) reductase"/>
    <property type="match status" value="1"/>
</dbReference>
<dbReference type="FunFam" id="3.50.50.60:FF:000075">
    <property type="entry name" value="Nitric oxide reductase FlRd-NAD(+) reductase"/>
    <property type="match status" value="1"/>
</dbReference>
<dbReference type="Gene3D" id="3.30.390.120">
    <property type="match status" value="1"/>
</dbReference>
<dbReference type="Gene3D" id="3.50.50.60">
    <property type="entry name" value="FAD/NAD(P)-binding domain"/>
    <property type="match status" value="2"/>
</dbReference>
<dbReference type="HAMAP" id="MF_01313">
    <property type="entry name" value="NorW"/>
    <property type="match status" value="1"/>
</dbReference>
<dbReference type="InterPro" id="IPR050260">
    <property type="entry name" value="FAD-bd_OxRdtase"/>
</dbReference>
<dbReference type="InterPro" id="IPR036188">
    <property type="entry name" value="FAD/NAD-bd_sf"/>
</dbReference>
<dbReference type="InterPro" id="IPR023753">
    <property type="entry name" value="FAD/NAD-binding_dom"/>
</dbReference>
<dbReference type="InterPro" id="IPR023961">
    <property type="entry name" value="NO_rdtase_NorW"/>
</dbReference>
<dbReference type="InterPro" id="IPR041364">
    <property type="entry name" value="Rbx-bd"/>
</dbReference>
<dbReference type="NCBIfam" id="NF003437">
    <property type="entry name" value="PRK04965.1"/>
    <property type="match status" value="1"/>
</dbReference>
<dbReference type="PANTHER" id="PTHR43429:SF3">
    <property type="entry name" value="NITRITE REDUCTASE [NAD(P)H]"/>
    <property type="match status" value="1"/>
</dbReference>
<dbReference type="PANTHER" id="PTHR43429">
    <property type="entry name" value="PYRIDINE NUCLEOTIDE-DISULFIDE OXIDOREDUCTASE DOMAIN-CONTAINING"/>
    <property type="match status" value="1"/>
</dbReference>
<dbReference type="Pfam" id="PF07992">
    <property type="entry name" value="Pyr_redox_2"/>
    <property type="match status" value="1"/>
</dbReference>
<dbReference type="Pfam" id="PF18113">
    <property type="entry name" value="Rbx_binding"/>
    <property type="match status" value="1"/>
</dbReference>
<dbReference type="PRINTS" id="PR00368">
    <property type="entry name" value="FADPNR"/>
</dbReference>
<dbReference type="PRINTS" id="PR00411">
    <property type="entry name" value="PNDRDTASEI"/>
</dbReference>
<dbReference type="SUPFAM" id="SSF51905">
    <property type="entry name" value="FAD/NAD(P)-binding domain"/>
    <property type="match status" value="1"/>
</dbReference>
<gene>
    <name evidence="1" type="primary">norW</name>
    <name evidence="1" type="synonym">flrR</name>
    <name type="ordered locus">E2348C_2968</name>
</gene>
<comment type="function">
    <text evidence="1">One of at least two accessory proteins for anaerobic nitric oxide (NO) reductase. Reduces the rubredoxin moiety of NO reductase.</text>
</comment>
<comment type="catalytic activity">
    <reaction evidence="1">
        <text>2 reduced [nitric oxide reductase rubredoxin domain] + NAD(+) + H(+) = 2 oxidized [nitric oxide reductase rubredoxin domain] + NADH</text>
        <dbReference type="Rhea" id="RHEA:42960"/>
        <dbReference type="Rhea" id="RHEA-COMP:10304"/>
        <dbReference type="Rhea" id="RHEA-COMP:10305"/>
        <dbReference type="ChEBI" id="CHEBI:15378"/>
        <dbReference type="ChEBI" id="CHEBI:29033"/>
        <dbReference type="ChEBI" id="CHEBI:29034"/>
        <dbReference type="ChEBI" id="CHEBI:57540"/>
        <dbReference type="ChEBI" id="CHEBI:57945"/>
    </reaction>
</comment>
<comment type="cofactor">
    <cofactor evidence="1">
        <name>FAD</name>
        <dbReference type="ChEBI" id="CHEBI:57692"/>
    </cofactor>
</comment>
<comment type="pathway">
    <text evidence="1">Nitrogen metabolism; nitric oxide reduction.</text>
</comment>
<comment type="subcellular location">
    <subcellularLocation>
        <location evidence="1">Cytoplasm</location>
    </subcellularLocation>
</comment>
<comment type="similarity">
    <text evidence="1">Belongs to the FAD-dependent oxidoreductase family.</text>
</comment>
<name>NORW_ECO27</name>
<protein>
    <recommendedName>
        <fullName evidence="1">Nitric oxide reductase FlRd-NAD(+) reductase</fullName>
        <ecNumber evidence="1">1.18.1.-</ecNumber>
    </recommendedName>
    <alternativeName>
        <fullName evidence="1">Flavorubredoxin reductase</fullName>
        <shortName evidence="1">FlRd-reductase</shortName>
        <shortName evidence="1">FlavoRb reductase</shortName>
    </alternativeName>
</protein>
<keyword id="KW-0963">Cytoplasm</keyword>
<keyword id="KW-0274">FAD</keyword>
<keyword id="KW-0285">Flavoprotein</keyword>
<keyword id="KW-0520">NAD</keyword>
<keyword id="KW-0560">Oxidoreductase</keyword>
<keyword id="KW-1185">Reference proteome</keyword>
<organism>
    <name type="scientific">Escherichia coli O127:H6 (strain E2348/69 / EPEC)</name>
    <dbReference type="NCBI Taxonomy" id="574521"/>
    <lineage>
        <taxon>Bacteria</taxon>
        <taxon>Pseudomonadati</taxon>
        <taxon>Pseudomonadota</taxon>
        <taxon>Gammaproteobacteria</taxon>
        <taxon>Enterobacterales</taxon>
        <taxon>Enterobacteriaceae</taxon>
        <taxon>Escherichia</taxon>
    </lineage>
</organism>